<proteinExistence type="inferred from homology"/>
<reference key="1">
    <citation type="submission" date="2007-06" db="EMBL/GenBank/DDBJ databases">
        <title>Complete sequence of Methanococcus aeolicus Nankai-3.</title>
        <authorList>
            <consortium name="US DOE Joint Genome Institute"/>
            <person name="Copeland A."/>
            <person name="Lucas S."/>
            <person name="Lapidus A."/>
            <person name="Barry K."/>
            <person name="Glavina del Rio T."/>
            <person name="Dalin E."/>
            <person name="Tice H."/>
            <person name="Pitluck S."/>
            <person name="Chain P."/>
            <person name="Malfatti S."/>
            <person name="Shin M."/>
            <person name="Vergez L."/>
            <person name="Schmutz J."/>
            <person name="Larimer F."/>
            <person name="Land M."/>
            <person name="Hauser L."/>
            <person name="Kyrpides N."/>
            <person name="Lykidis A."/>
            <person name="Sieprawska-Lupa M."/>
            <person name="Whitman W.B."/>
            <person name="Richardson P."/>
        </authorList>
    </citation>
    <scope>NUCLEOTIDE SEQUENCE [LARGE SCALE GENOMIC DNA]</scope>
    <source>
        <strain>ATCC BAA-1280 / DSM 17508 / OCM 812 / Nankai-3</strain>
    </source>
</reference>
<gene>
    <name evidence="1" type="primary">thrS</name>
    <name type="ordered locus">Maeo_1189</name>
</gene>
<protein>
    <recommendedName>
        <fullName evidence="1">Threonine--tRNA ligase</fullName>
        <ecNumber evidence="1">6.1.1.3</ecNumber>
    </recommendedName>
    <alternativeName>
        <fullName evidence="1">Threonyl-tRNA synthetase</fullName>
        <shortName evidence="1">ThrRS</shortName>
    </alternativeName>
</protein>
<name>SYT_META3</name>
<sequence length="630" mass="72953">MKVLLIHSDYLEFEAKQKTKIAEDTDILNGKMEECLTVFMAVEKEDEENPQNVIYNTVDEIIKTAENLKINNVVVYPYAHLSSELSSPKVAKEVLQKIEEELKQKNYSVLRAPFGWYKSFKISCKGHPLSELSRKITTERKEEKGETEAKDRPKNKFYILDGEKGEEGLKELDEKKVKKLKDKGLKSVAMHEMGIKHGGKEKDIEPPHVKFITEKEICDYEPSSDAGHFRWYPKGKLIRDLLQDYVYNMVVENNGMPVETPVMYDLGNKAIKEHADKFGERQYRFKQGNKDLMLRFAACFGQFMMKKDMYILPKHLPLKLYELSTYSFRYEQRGELVGLKRLRGFTMPDMHTVCKDTKQTIEEFENQFWMCLKTGDDLNTPYSTIFRFTEDFFEENKEWFFKVAKEYKEKYGKDVILELIPERKHYWVGKVDMAVIDSFGRPIENPTVQIDVESAKRFNIVVHDGNEKTYPVILHCSPTGSIERVLCGLLEKASLDADAGAPPMLPVWLSPIQARVIPVADAHSEYALSVAKKLRENGIRADFDDREESVGKKIRNAGKDWVPFVIVIGDKEVENNILTTTIREKSTLKKPVKENLTVEELIEKIKEETKGFPYRPLSLPLYCSLQPIFR</sequence>
<evidence type="ECO:0000255" key="1">
    <source>
        <dbReference type="HAMAP-Rule" id="MF_00184"/>
    </source>
</evidence>
<comment type="function">
    <text evidence="1">Catalyzes the attachment of threonine to tRNA(Thr) in a two-step reaction: L-threonine is first activated by ATP to form Thr-AMP and then transferred to the acceptor end of tRNA(Thr). Also edits incorrectly charged L-seryl-tRNA(Thr).</text>
</comment>
<comment type="catalytic activity">
    <reaction evidence="1">
        <text>tRNA(Thr) + L-threonine + ATP = L-threonyl-tRNA(Thr) + AMP + diphosphate + H(+)</text>
        <dbReference type="Rhea" id="RHEA:24624"/>
        <dbReference type="Rhea" id="RHEA-COMP:9670"/>
        <dbReference type="Rhea" id="RHEA-COMP:9704"/>
        <dbReference type="ChEBI" id="CHEBI:15378"/>
        <dbReference type="ChEBI" id="CHEBI:30616"/>
        <dbReference type="ChEBI" id="CHEBI:33019"/>
        <dbReference type="ChEBI" id="CHEBI:57926"/>
        <dbReference type="ChEBI" id="CHEBI:78442"/>
        <dbReference type="ChEBI" id="CHEBI:78534"/>
        <dbReference type="ChEBI" id="CHEBI:456215"/>
        <dbReference type="EC" id="6.1.1.3"/>
    </reaction>
</comment>
<comment type="cofactor">
    <cofactor evidence="1">
        <name>Zn(2+)</name>
        <dbReference type="ChEBI" id="CHEBI:29105"/>
    </cofactor>
    <text evidence="1">Binds 1 zinc ion per subunit.</text>
</comment>
<comment type="subunit">
    <text evidence="1">Homodimer.</text>
</comment>
<comment type="subcellular location">
    <subcellularLocation>
        <location evidence="1">Cytoplasm</location>
    </subcellularLocation>
</comment>
<comment type="domain">
    <text evidence="1">The N-terminal domain is an archaea-specific tRNA-editing domain that hydrolyzes incorrectly charged L-seryl-tRNA(Thr). Catalysis of tRNA editing is performed by the charged tRNA itself.</text>
</comment>
<comment type="similarity">
    <text evidence="1">Belongs to the class-II aminoacyl-tRNA synthetase family.</text>
</comment>
<dbReference type="EC" id="6.1.1.3" evidence="1"/>
<dbReference type="EMBL" id="CP000743">
    <property type="protein sequence ID" value="ABR56766.1"/>
    <property type="molecule type" value="Genomic_DNA"/>
</dbReference>
<dbReference type="RefSeq" id="WP_011973898.1">
    <property type="nucleotide sequence ID" value="NC_009635.1"/>
</dbReference>
<dbReference type="SMR" id="A6UW94"/>
<dbReference type="STRING" id="419665.Maeo_1189"/>
<dbReference type="GeneID" id="5327250"/>
<dbReference type="KEGG" id="mae:Maeo_1189"/>
<dbReference type="eggNOG" id="arCOG00401">
    <property type="taxonomic scope" value="Archaea"/>
</dbReference>
<dbReference type="HOGENOM" id="CLU_029833_0_0_2"/>
<dbReference type="OrthoDB" id="372136at2157"/>
<dbReference type="Proteomes" id="UP000001106">
    <property type="component" value="Chromosome"/>
</dbReference>
<dbReference type="GO" id="GO:0005737">
    <property type="term" value="C:cytoplasm"/>
    <property type="evidence" value="ECO:0007669"/>
    <property type="project" value="UniProtKB-SubCell"/>
</dbReference>
<dbReference type="GO" id="GO:0005524">
    <property type="term" value="F:ATP binding"/>
    <property type="evidence" value="ECO:0007669"/>
    <property type="project" value="UniProtKB-UniRule"/>
</dbReference>
<dbReference type="GO" id="GO:0004829">
    <property type="term" value="F:threonine-tRNA ligase activity"/>
    <property type="evidence" value="ECO:0007669"/>
    <property type="project" value="UniProtKB-UniRule"/>
</dbReference>
<dbReference type="GO" id="GO:0000049">
    <property type="term" value="F:tRNA binding"/>
    <property type="evidence" value="ECO:0007669"/>
    <property type="project" value="UniProtKB-KW"/>
</dbReference>
<dbReference type="GO" id="GO:0008270">
    <property type="term" value="F:zinc ion binding"/>
    <property type="evidence" value="ECO:0007669"/>
    <property type="project" value="InterPro"/>
</dbReference>
<dbReference type="GO" id="GO:0006435">
    <property type="term" value="P:threonyl-tRNA aminoacylation"/>
    <property type="evidence" value="ECO:0007669"/>
    <property type="project" value="UniProtKB-UniRule"/>
</dbReference>
<dbReference type="CDD" id="cd00860">
    <property type="entry name" value="ThrRS_anticodon"/>
    <property type="match status" value="1"/>
</dbReference>
<dbReference type="FunFam" id="3.40.50.800:FF:000001">
    <property type="entry name" value="Threonine--tRNA ligase"/>
    <property type="match status" value="1"/>
</dbReference>
<dbReference type="FunFam" id="3.50.80.10:FF:000004">
    <property type="entry name" value="Threonine--tRNA ligase"/>
    <property type="match status" value="1"/>
</dbReference>
<dbReference type="Gene3D" id="3.40.50.800">
    <property type="entry name" value="Anticodon-binding domain"/>
    <property type="match status" value="1"/>
</dbReference>
<dbReference type="Gene3D" id="3.30.930.10">
    <property type="entry name" value="Bira Bifunctional Protein, Domain 2"/>
    <property type="match status" value="1"/>
</dbReference>
<dbReference type="Gene3D" id="3.50.80.10">
    <property type="entry name" value="D-tyrosyl-tRNA(Tyr) deacylase"/>
    <property type="match status" value="1"/>
</dbReference>
<dbReference type="HAMAP" id="MF_00184">
    <property type="entry name" value="Thr_tRNA_synth"/>
    <property type="match status" value="1"/>
</dbReference>
<dbReference type="InterPro" id="IPR002314">
    <property type="entry name" value="aa-tRNA-synt_IIb"/>
</dbReference>
<dbReference type="InterPro" id="IPR006195">
    <property type="entry name" value="aa-tRNA-synth_II"/>
</dbReference>
<dbReference type="InterPro" id="IPR045864">
    <property type="entry name" value="aa-tRNA-synth_II/BPL/LPL"/>
</dbReference>
<dbReference type="InterPro" id="IPR004154">
    <property type="entry name" value="Anticodon-bd"/>
</dbReference>
<dbReference type="InterPro" id="IPR036621">
    <property type="entry name" value="Anticodon-bd_dom_sf"/>
</dbReference>
<dbReference type="InterPro" id="IPR023509">
    <property type="entry name" value="DTD-like_sf"/>
</dbReference>
<dbReference type="InterPro" id="IPR002320">
    <property type="entry name" value="Thr-tRNA-ligase_IIa"/>
</dbReference>
<dbReference type="InterPro" id="IPR015011">
    <property type="entry name" value="Threonyl-tRNA_syn_edit_dom_arc"/>
</dbReference>
<dbReference type="InterPro" id="IPR047246">
    <property type="entry name" value="ThrRS_anticodon"/>
</dbReference>
<dbReference type="NCBIfam" id="NF003068">
    <property type="entry name" value="PRK03991.1"/>
    <property type="match status" value="1"/>
</dbReference>
<dbReference type="NCBIfam" id="TIGR00418">
    <property type="entry name" value="thrS"/>
    <property type="match status" value="1"/>
</dbReference>
<dbReference type="PANTHER" id="PTHR11451:SF44">
    <property type="entry name" value="THREONINE--TRNA LIGASE, CHLOROPLASTIC_MITOCHONDRIAL 2"/>
    <property type="match status" value="1"/>
</dbReference>
<dbReference type="PANTHER" id="PTHR11451">
    <property type="entry name" value="THREONINE-TRNA LIGASE"/>
    <property type="match status" value="1"/>
</dbReference>
<dbReference type="Pfam" id="PF03129">
    <property type="entry name" value="HGTP_anticodon"/>
    <property type="match status" value="1"/>
</dbReference>
<dbReference type="Pfam" id="PF00587">
    <property type="entry name" value="tRNA-synt_2b"/>
    <property type="match status" value="1"/>
</dbReference>
<dbReference type="Pfam" id="PF08915">
    <property type="entry name" value="tRNA-Thr_ED"/>
    <property type="match status" value="1"/>
</dbReference>
<dbReference type="PRINTS" id="PR01047">
    <property type="entry name" value="TRNASYNTHTHR"/>
</dbReference>
<dbReference type="SUPFAM" id="SSF52954">
    <property type="entry name" value="Class II aaRS ABD-related"/>
    <property type="match status" value="1"/>
</dbReference>
<dbReference type="SUPFAM" id="SSF55681">
    <property type="entry name" value="Class II aaRS and biotin synthetases"/>
    <property type="match status" value="1"/>
</dbReference>
<dbReference type="PROSITE" id="PS50862">
    <property type="entry name" value="AA_TRNA_LIGASE_II"/>
    <property type="match status" value="1"/>
</dbReference>
<accession>A6UW94</accession>
<keyword id="KW-0030">Aminoacyl-tRNA synthetase</keyword>
<keyword id="KW-0067">ATP-binding</keyword>
<keyword id="KW-0963">Cytoplasm</keyword>
<keyword id="KW-0436">Ligase</keyword>
<keyword id="KW-0479">Metal-binding</keyword>
<keyword id="KW-0547">Nucleotide-binding</keyword>
<keyword id="KW-0648">Protein biosynthesis</keyword>
<keyword id="KW-0694">RNA-binding</keyword>
<keyword id="KW-0820">tRNA-binding</keyword>
<keyword id="KW-0862">Zinc</keyword>
<organism>
    <name type="scientific">Methanococcus aeolicus (strain ATCC BAA-1280 / DSM 17508 / OCM 812 / Nankai-3)</name>
    <dbReference type="NCBI Taxonomy" id="419665"/>
    <lineage>
        <taxon>Archaea</taxon>
        <taxon>Methanobacteriati</taxon>
        <taxon>Methanobacteriota</taxon>
        <taxon>Methanomada group</taxon>
        <taxon>Methanococci</taxon>
        <taxon>Methanococcales</taxon>
        <taxon>Methanococcaceae</taxon>
        <taxon>Methanococcus</taxon>
    </lineage>
</organism>
<feature type="chain" id="PRO_1000020424" description="Threonine--tRNA ligase">
    <location>
        <begin position="1"/>
        <end position="630"/>
    </location>
</feature>
<feature type="region of interest" description="Editing domain" evidence="1">
    <location>
        <begin position="1"/>
        <end position="137"/>
    </location>
</feature>
<feature type="region of interest" description="Catalytic" evidence="1">
    <location>
        <begin position="207"/>
        <end position="506"/>
    </location>
</feature>
<feature type="binding site" evidence="1">
    <location>
        <position position="299"/>
    </location>
    <ligand>
        <name>Zn(2+)</name>
        <dbReference type="ChEBI" id="CHEBI:29105"/>
    </ligand>
</feature>
<feature type="binding site" evidence="1">
    <location>
        <position position="351"/>
    </location>
    <ligand>
        <name>Zn(2+)</name>
        <dbReference type="ChEBI" id="CHEBI:29105"/>
    </ligand>
</feature>
<feature type="binding site" evidence="1">
    <location>
        <position position="475"/>
    </location>
    <ligand>
        <name>Zn(2+)</name>
        <dbReference type="ChEBI" id="CHEBI:29105"/>
    </ligand>
</feature>